<evidence type="ECO:0000255" key="1"/>
<evidence type="ECO:0000305" key="2"/>
<accession>O71196</accession>
<name>P4_GLRV3</name>
<proteinExistence type="predicted"/>
<dbReference type="EMBL" id="AF037268">
    <property type="protein sequence ID" value="AAC40715.1"/>
    <property type="molecule type" value="Genomic_RNA"/>
</dbReference>
<dbReference type="RefSeq" id="NP_813806.1">
    <property type="nucleotide sequence ID" value="NC_004667.1"/>
</dbReference>
<dbReference type="KEGG" id="vg:1444472"/>
<dbReference type="Proteomes" id="UP000006707">
    <property type="component" value="Segment"/>
</dbReference>
<dbReference type="GO" id="GO:0033644">
    <property type="term" value="C:host cell membrane"/>
    <property type="evidence" value="ECO:0007669"/>
    <property type="project" value="UniProtKB-SubCell"/>
</dbReference>
<dbReference type="GO" id="GO:0016020">
    <property type="term" value="C:membrane"/>
    <property type="evidence" value="ECO:0007669"/>
    <property type="project" value="UniProtKB-KW"/>
</dbReference>
<reference key="1">
    <citation type="journal article" date="1998" name="J. Gen. Virol.">
        <title>Nucleotide sequence of the 3'-terminal two-thirds of the grapevine leafroll-associated virus-3 genome reveals a typical monopartite closterovirus.</title>
        <authorList>
            <person name="Ling K.S."/>
            <person name="Zhu H.Y."/>
            <person name="Drong R.F."/>
            <person name="Slightom J.L."/>
            <person name="McFerson J.R."/>
            <person name="Gonsalves D."/>
        </authorList>
    </citation>
    <scope>NUCLEOTIDE SEQUENCE [GENOMIC RNA]</scope>
</reference>
<feature type="chain" id="PRO_0000402522" description="Protein P4">
    <location>
        <begin position="1"/>
        <end position="36"/>
    </location>
</feature>
<feature type="transmembrane region" description="Helical" evidence="1">
    <location>
        <begin position="13"/>
        <end position="33"/>
    </location>
</feature>
<keyword id="KW-1043">Host membrane</keyword>
<keyword id="KW-0472">Membrane</keyword>
<keyword id="KW-1185">Reference proteome</keyword>
<keyword id="KW-0812">Transmembrane</keyword>
<keyword id="KW-1133">Transmembrane helix</keyword>
<gene>
    <name type="ORF">ORF11</name>
</gene>
<organismHost>
    <name type="scientific">Vitis vinifera</name>
    <name type="common">Grape</name>
    <dbReference type="NCBI Taxonomy" id="29760"/>
</organismHost>
<organism>
    <name type="scientific">Grapevine leafroll-associated virus 3 (isolate United States/NY1)</name>
    <name type="common">GLRaV-3</name>
    <name type="synonym">Grapevine leafroll-associated closterovirus (isolate 109)</name>
    <dbReference type="NCBI Taxonomy" id="651354"/>
    <lineage>
        <taxon>Viruses</taxon>
        <taxon>Riboviria</taxon>
        <taxon>Orthornavirae</taxon>
        <taxon>Kitrinoviricota</taxon>
        <taxon>Alsuviricetes</taxon>
        <taxon>Martellivirales</taxon>
        <taxon>Closteroviridae</taxon>
        <taxon>Ampelovirus</taxon>
        <taxon>Grapevine leafroll-associated virus 3</taxon>
    </lineage>
</organism>
<sequence>MLCCSASVKFSNGLQLSLLICACLLAVLIVSFCRRR</sequence>
<protein>
    <recommendedName>
        <fullName>Protein P4</fullName>
    </recommendedName>
    <alternativeName>
        <fullName>4 kDa protein</fullName>
    </alternativeName>
</protein>
<comment type="subcellular location">
    <subcellularLocation>
        <location evidence="2">Host membrane</location>
        <topology evidence="2">Single-pass membrane protein</topology>
    </subcellularLocation>
</comment>